<accession>A4WDH1</accession>
<evidence type="ECO:0000255" key="1">
    <source>
        <dbReference type="HAMAP-Rule" id="MF_00402"/>
    </source>
</evidence>
<evidence type="ECO:0000305" key="2"/>
<keyword id="KW-0687">Ribonucleoprotein</keyword>
<keyword id="KW-0689">Ribosomal protein</keyword>
<organism>
    <name type="scientific">Enterobacter sp. (strain 638)</name>
    <dbReference type="NCBI Taxonomy" id="399742"/>
    <lineage>
        <taxon>Bacteria</taxon>
        <taxon>Pseudomonadati</taxon>
        <taxon>Pseudomonadota</taxon>
        <taxon>Gammaproteobacteria</taxon>
        <taxon>Enterobacterales</taxon>
        <taxon>Enterobacteriaceae</taxon>
        <taxon>Enterobacter</taxon>
    </lineage>
</organism>
<name>RL19_ENT38</name>
<protein>
    <recommendedName>
        <fullName evidence="1">Large ribosomal subunit protein bL19</fullName>
    </recommendedName>
    <alternativeName>
        <fullName evidence="2">50S ribosomal protein L19</fullName>
    </alternativeName>
</protein>
<proteinExistence type="inferred from homology"/>
<sequence length="115" mass="13106">MSNIIKQIEQEQMKQDVPSFRPGDSVEVKVWVVEGTKKRLQAFEGVVIAIRNRGLHSAFTVRKISNGEGVERVFQTHSPVIDSISVKRRGAVRKAKLYYLRERTGKSARIKERLG</sequence>
<gene>
    <name evidence="1" type="primary">rplS</name>
    <name type="ordered locus">Ent638_3087</name>
</gene>
<dbReference type="EMBL" id="CP000653">
    <property type="protein sequence ID" value="ABP61751.1"/>
    <property type="molecule type" value="Genomic_DNA"/>
</dbReference>
<dbReference type="RefSeq" id="WP_015960081.1">
    <property type="nucleotide sequence ID" value="NC_009436.1"/>
</dbReference>
<dbReference type="SMR" id="A4WDH1"/>
<dbReference type="STRING" id="399742.Ent638_3087"/>
<dbReference type="KEGG" id="ent:Ent638_3087"/>
<dbReference type="eggNOG" id="COG0335">
    <property type="taxonomic scope" value="Bacteria"/>
</dbReference>
<dbReference type="HOGENOM" id="CLU_103507_2_1_6"/>
<dbReference type="OrthoDB" id="9803541at2"/>
<dbReference type="Proteomes" id="UP000000230">
    <property type="component" value="Chromosome"/>
</dbReference>
<dbReference type="GO" id="GO:0022625">
    <property type="term" value="C:cytosolic large ribosomal subunit"/>
    <property type="evidence" value="ECO:0007669"/>
    <property type="project" value="TreeGrafter"/>
</dbReference>
<dbReference type="GO" id="GO:0003735">
    <property type="term" value="F:structural constituent of ribosome"/>
    <property type="evidence" value="ECO:0007669"/>
    <property type="project" value="InterPro"/>
</dbReference>
<dbReference type="GO" id="GO:0006412">
    <property type="term" value="P:translation"/>
    <property type="evidence" value="ECO:0007669"/>
    <property type="project" value="UniProtKB-UniRule"/>
</dbReference>
<dbReference type="FunFam" id="2.30.30.790:FF:000001">
    <property type="entry name" value="50S ribosomal protein L19"/>
    <property type="match status" value="1"/>
</dbReference>
<dbReference type="Gene3D" id="2.30.30.790">
    <property type="match status" value="1"/>
</dbReference>
<dbReference type="HAMAP" id="MF_00402">
    <property type="entry name" value="Ribosomal_bL19"/>
    <property type="match status" value="1"/>
</dbReference>
<dbReference type="InterPro" id="IPR001857">
    <property type="entry name" value="Ribosomal_bL19"/>
</dbReference>
<dbReference type="InterPro" id="IPR018257">
    <property type="entry name" value="Ribosomal_bL19_CS"/>
</dbReference>
<dbReference type="InterPro" id="IPR038657">
    <property type="entry name" value="Ribosomal_bL19_sf"/>
</dbReference>
<dbReference type="InterPro" id="IPR008991">
    <property type="entry name" value="Translation_prot_SH3-like_sf"/>
</dbReference>
<dbReference type="NCBIfam" id="TIGR01024">
    <property type="entry name" value="rplS_bact"/>
    <property type="match status" value="1"/>
</dbReference>
<dbReference type="PANTHER" id="PTHR15680:SF9">
    <property type="entry name" value="LARGE RIBOSOMAL SUBUNIT PROTEIN BL19M"/>
    <property type="match status" value="1"/>
</dbReference>
<dbReference type="PANTHER" id="PTHR15680">
    <property type="entry name" value="RIBOSOMAL PROTEIN L19"/>
    <property type="match status" value="1"/>
</dbReference>
<dbReference type="Pfam" id="PF01245">
    <property type="entry name" value="Ribosomal_L19"/>
    <property type="match status" value="1"/>
</dbReference>
<dbReference type="PIRSF" id="PIRSF002191">
    <property type="entry name" value="Ribosomal_L19"/>
    <property type="match status" value="1"/>
</dbReference>
<dbReference type="PRINTS" id="PR00061">
    <property type="entry name" value="RIBOSOMALL19"/>
</dbReference>
<dbReference type="SUPFAM" id="SSF50104">
    <property type="entry name" value="Translation proteins SH3-like domain"/>
    <property type="match status" value="1"/>
</dbReference>
<dbReference type="PROSITE" id="PS01015">
    <property type="entry name" value="RIBOSOMAL_L19"/>
    <property type="match status" value="1"/>
</dbReference>
<comment type="function">
    <text evidence="1">This protein is located at the 30S-50S ribosomal subunit interface and may play a role in the structure and function of the aminoacyl-tRNA binding site.</text>
</comment>
<comment type="similarity">
    <text evidence="1">Belongs to the bacterial ribosomal protein bL19 family.</text>
</comment>
<reference key="1">
    <citation type="journal article" date="2010" name="PLoS Genet.">
        <title>Genome sequence of the plant growth promoting endophytic bacterium Enterobacter sp. 638.</title>
        <authorList>
            <person name="Taghavi S."/>
            <person name="van der Lelie D."/>
            <person name="Hoffman A."/>
            <person name="Zhang Y.B."/>
            <person name="Walla M.D."/>
            <person name="Vangronsveld J."/>
            <person name="Newman L."/>
            <person name="Monchy S."/>
        </authorList>
    </citation>
    <scope>NUCLEOTIDE SEQUENCE [LARGE SCALE GENOMIC DNA]</scope>
    <source>
        <strain>638</strain>
    </source>
</reference>
<feature type="chain" id="PRO_1000060803" description="Large ribosomal subunit protein bL19">
    <location>
        <begin position="1"/>
        <end position="115"/>
    </location>
</feature>